<accession>B0BRY1</accession>
<evidence type="ECO:0000255" key="1">
    <source>
        <dbReference type="HAMAP-Rule" id="MF_00129"/>
    </source>
</evidence>
<organism>
    <name type="scientific">Actinobacillus pleuropneumoniae serotype 3 (strain JL03)</name>
    <dbReference type="NCBI Taxonomy" id="434271"/>
    <lineage>
        <taxon>Bacteria</taxon>
        <taxon>Pseudomonadati</taxon>
        <taxon>Pseudomonadota</taxon>
        <taxon>Gammaproteobacteria</taxon>
        <taxon>Pasteurellales</taxon>
        <taxon>Pasteurellaceae</taxon>
        <taxon>Actinobacillus</taxon>
    </lineage>
</organism>
<dbReference type="EMBL" id="CP000687">
    <property type="protein sequence ID" value="ABY70240.1"/>
    <property type="molecule type" value="Genomic_DNA"/>
</dbReference>
<dbReference type="RefSeq" id="WP_012263333.1">
    <property type="nucleotide sequence ID" value="NC_010278.1"/>
</dbReference>
<dbReference type="SMR" id="B0BRY1"/>
<dbReference type="KEGG" id="apj:APJL_1688"/>
<dbReference type="HOGENOM" id="CLU_007831_2_2_6"/>
<dbReference type="Proteomes" id="UP000008547">
    <property type="component" value="Chromosome"/>
</dbReference>
<dbReference type="GO" id="GO:0005829">
    <property type="term" value="C:cytosol"/>
    <property type="evidence" value="ECO:0007669"/>
    <property type="project" value="TreeGrafter"/>
</dbReference>
<dbReference type="GO" id="GO:0050660">
    <property type="term" value="F:flavin adenine dinucleotide binding"/>
    <property type="evidence" value="ECO:0007669"/>
    <property type="project" value="UniProtKB-UniRule"/>
</dbReference>
<dbReference type="GO" id="GO:0030488">
    <property type="term" value="P:tRNA methylation"/>
    <property type="evidence" value="ECO:0007669"/>
    <property type="project" value="TreeGrafter"/>
</dbReference>
<dbReference type="GO" id="GO:0002098">
    <property type="term" value="P:tRNA wobble uridine modification"/>
    <property type="evidence" value="ECO:0007669"/>
    <property type="project" value="InterPro"/>
</dbReference>
<dbReference type="FunFam" id="1.10.10.1800:FF:000001">
    <property type="entry name" value="tRNA uridine 5-carboxymethylaminomethyl modification enzyme MnmG"/>
    <property type="match status" value="1"/>
</dbReference>
<dbReference type="FunFam" id="1.10.150.570:FF:000001">
    <property type="entry name" value="tRNA uridine 5-carboxymethylaminomethyl modification enzyme MnmG"/>
    <property type="match status" value="1"/>
</dbReference>
<dbReference type="FunFam" id="3.50.50.60:FF:000002">
    <property type="entry name" value="tRNA uridine 5-carboxymethylaminomethyl modification enzyme MnmG"/>
    <property type="match status" value="1"/>
</dbReference>
<dbReference type="FunFam" id="3.50.50.60:FF:000010">
    <property type="entry name" value="tRNA uridine 5-carboxymethylaminomethyl modification enzyme MnmG"/>
    <property type="match status" value="1"/>
</dbReference>
<dbReference type="Gene3D" id="3.50.50.60">
    <property type="entry name" value="FAD/NAD(P)-binding domain"/>
    <property type="match status" value="2"/>
</dbReference>
<dbReference type="Gene3D" id="1.10.150.570">
    <property type="entry name" value="GidA associated domain, C-terminal subdomain"/>
    <property type="match status" value="1"/>
</dbReference>
<dbReference type="Gene3D" id="1.10.10.1800">
    <property type="entry name" value="tRNA uridine 5-carboxymethylaminomethyl modification enzyme MnmG/GidA"/>
    <property type="match status" value="1"/>
</dbReference>
<dbReference type="HAMAP" id="MF_00129">
    <property type="entry name" value="MnmG_GidA"/>
    <property type="match status" value="1"/>
</dbReference>
<dbReference type="InterPro" id="IPR036188">
    <property type="entry name" value="FAD/NAD-bd_sf"/>
</dbReference>
<dbReference type="InterPro" id="IPR049312">
    <property type="entry name" value="GIDA_C_N"/>
</dbReference>
<dbReference type="InterPro" id="IPR004416">
    <property type="entry name" value="MnmG"/>
</dbReference>
<dbReference type="InterPro" id="IPR002218">
    <property type="entry name" value="MnmG-rel"/>
</dbReference>
<dbReference type="InterPro" id="IPR020595">
    <property type="entry name" value="MnmG-rel_CS"/>
</dbReference>
<dbReference type="InterPro" id="IPR026904">
    <property type="entry name" value="MnmG_C"/>
</dbReference>
<dbReference type="InterPro" id="IPR047001">
    <property type="entry name" value="MnmG_C_subdom"/>
</dbReference>
<dbReference type="InterPro" id="IPR044920">
    <property type="entry name" value="MnmG_C_subdom_sf"/>
</dbReference>
<dbReference type="InterPro" id="IPR040131">
    <property type="entry name" value="MnmG_N"/>
</dbReference>
<dbReference type="NCBIfam" id="TIGR00136">
    <property type="entry name" value="mnmG_gidA"/>
    <property type="match status" value="1"/>
</dbReference>
<dbReference type="PANTHER" id="PTHR11806">
    <property type="entry name" value="GLUCOSE INHIBITED DIVISION PROTEIN A"/>
    <property type="match status" value="1"/>
</dbReference>
<dbReference type="PANTHER" id="PTHR11806:SF0">
    <property type="entry name" value="PROTEIN MTO1 HOMOLOG, MITOCHONDRIAL"/>
    <property type="match status" value="1"/>
</dbReference>
<dbReference type="Pfam" id="PF01134">
    <property type="entry name" value="GIDA"/>
    <property type="match status" value="1"/>
</dbReference>
<dbReference type="Pfam" id="PF21680">
    <property type="entry name" value="GIDA_C_1st"/>
    <property type="match status" value="1"/>
</dbReference>
<dbReference type="Pfam" id="PF13932">
    <property type="entry name" value="SAM_GIDA_C"/>
    <property type="match status" value="1"/>
</dbReference>
<dbReference type="SMART" id="SM01228">
    <property type="entry name" value="GIDA_assoc_3"/>
    <property type="match status" value="1"/>
</dbReference>
<dbReference type="SUPFAM" id="SSF51905">
    <property type="entry name" value="FAD/NAD(P)-binding domain"/>
    <property type="match status" value="1"/>
</dbReference>
<dbReference type="PROSITE" id="PS01280">
    <property type="entry name" value="GIDA_1"/>
    <property type="match status" value="1"/>
</dbReference>
<dbReference type="PROSITE" id="PS01281">
    <property type="entry name" value="GIDA_2"/>
    <property type="match status" value="1"/>
</dbReference>
<sequence>MIYHEIYDVIVVGGGHAGTEAALAPARMGLKTLLLTHNVDTLGQMSCNPAIGGIGKGHLVKEIDAMGGLMAIAIDQAGIQFRTLNSSKGPAVRATRAQADRVLYRQAVRTALENQPNLDIFQQEVVDILVENNRAVGAVTKMGLTFKARSVVLTAGTFLAGKIHIGLDNYAGGRAGDPSATMLADRLRDLNLRVDRLKTGTPPRLDARTINFDVLAKQHGDAELPVMSFMGAVDLHPRQIPCYITHTNEQTHDLIRNSLDRSPMYTGVIEGSGPRYCPSIEDKVMRFSDRNSHQIYLEPEGLSTIEVYPNGISTSLPFDVQMGIVNSMKGLEKTRIIKPGYAIEYDYFDPRDLKPTLETKAIEGLFFAGQINGTTGYEEAAAQGLLAGINAALQVQGKEAWFPTRDLAYTGVLVDDLCTLGTKEPYRVFTSRAEYRLLLREDNADIRLTPIAHELGLIDDARWARFNQKMENIERERERLKQIWIHPQSEHLAVVNELVNSPLTREASGEDLLRRPEVTYDKLTQVAAFAPALDDKQAAEQVEISIKYQGYIEHQQNEIERHKRHENTLIPAEFDYDKVESLSNEVRAKLMQHRPVSIGQASRISGITPAAISILLVNLKKQGMLKRGEL</sequence>
<reference key="1">
    <citation type="journal article" date="2008" name="PLoS ONE">
        <title>Genome biology of Actinobacillus pleuropneumoniae JL03, an isolate of serotype 3 prevalent in China.</title>
        <authorList>
            <person name="Xu Z."/>
            <person name="Zhou Y."/>
            <person name="Li L."/>
            <person name="Zhou R."/>
            <person name="Xiao S."/>
            <person name="Wan Y."/>
            <person name="Zhang S."/>
            <person name="Wang K."/>
            <person name="Li W."/>
            <person name="Li L."/>
            <person name="Jin H."/>
            <person name="Kang M."/>
            <person name="Dalai B."/>
            <person name="Li T."/>
            <person name="Liu L."/>
            <person name="Cheng Y."/>
            <person name="Zhang L."/>
            <person name="Xu T."/>
            <person name="Zheng H."/>
            <person name="Pu S."/>
            <person name="Wang B."/>
            <person name="Gu W."/>
            <person name="Zhang X.L."/>
            <person name="Zhu G.-F."/>
            <person name="Wang S."/>
            <person name="Zhao G.-P."/>
            <person name="Chen H."/>
        </authorList>
    </citation>
    <scope>NUCLEOTIDE SEQUENCE [LARGE SCALE GENOMIC DNA]</scope>
    <source>
        <strain>JL03</strain>
    </source>
</reference>
<proteinExistence type="inferred from homology"/>
<gene>
    <name evidence="1" type="primary">mnmG</name>
    <name evidence="1" type="synonym">gidA</name>
    <name type="ordered locus">APJL_1688</name>
</gene>
<comment type="function">
    <text evidence="1">NAD-binding protein involved in the addition of a carboxymethylaminomethyl (cmnm) group at the wobble position (U34) of certain tRNAs, forming tRNA-cmnm(5)s(2)U34.</text>
</comment>
<comment type="cofactor">
    <cofactor evidence="1">
        <name>FAD</name>
        <dbReference type="ChEBI" id="CHEBI:57692"/>
    </cofactor>
</comment>
<comment type="subunit">
    <text evidence="1">Homodimer. Heterotetramer of two MnmE and two MnmG subunits.</text>
</comment>
<comment type="subcellular location">
    <subcellularLocation>
        <location evidence="1">Cytoplasm</location>
    </subcellularLocation>
</comment>
<comment type="similarity">
    <text evidence="1">Belongs to the MnmG family.</text>
</comment>
<name>MNMG_ACTPJ</name>
<feature type="chain" id="PRO_0000345237" description="tRNA uridine 5-carboxymethylaminomethyl modification enzyme MnmG">
    <location>
        <begin position="1"/>
        <end position="630"/>
    </location>
</feature>
<feature type="binding site" evidence="1">
    <location>
        <begin position="13"/>
        <end position="18"/>
    </location>
    <ligand>
        <name>FAD</name>
        <dbReference type="ChEBI" id="CHEBI:57692"/>
    </ligand>
</feature>
<feature type="binding site" evidence="1">
    <location>
        <begin position="273"/>
        <end position="287"/>
    </location>
    <ligand>
        <name>NAD(+)</name>
        <dbReference type="ChEBI" id="CHEBI:57540"/>
    </ligand>
</feature>
<protein>
    <recommendedName>
        <fullName evidence="1">tRNA uridine 5-carboxymethylaminomethyl modification enzyme MnmG</fullName>
    </recommendedName>
    <alternativeName>
        <fullName evidence="1">Glucose-inhibited division protein A</fullName>
    </alternativeName>
</protein>
<keyword id="KW-0963">Cytoplasm</keyword>
<keyword id="KW-0274">FAD</keyword>
<keyword id="KW-0285">Flavoprotein</keyword>
<keyword id="KW-0520">NAD</keyword>
<keyword id="KW-0819">tRNA processing</keyword>